<name>RIBB_DESAH</name>
<evidence type="ECO:0000255" key="1">
    <source>
        <dbReference type="HAMAP-Rule" id="MF_00180"/>
    </source>
</evidence>
<comment type="function">
    <text evidence="1">Catalyzes the conversion of D-ribulose 5-phosphate to formate and 3,4-dihydroxy-2-butanone 4-phosphate.</text>
</comment>
<comment type="catalytic activity">
    <reaction evidence="1">
        <text>D-ribulose 5-phosphate = (2S)-2-hydroxy-3-oxobutyl phosphate + formate + H(+)</text>
        <dbReference type="Rhea" id="RHEA:18457"/>
        <dbReference type="ChEBI" id="CHEBI:15378"/>
        <dbReference type="ChEBI" id="CHEBI:15740"/>
        <dbReference type="ChEBI" id="CHEBI:58121"/>
        <dbReference type="ChEBI" id="CHEBI:58830"/>
        <dbReference type="EC" id="4.1.99.12"/>
    </reaction>
</comment>
<comment type="cofactor">
    <cofactor evidence="1">
        <name>Mg(2+)</name>
        <dbReference type="ChEBI" id="CHEBI:18420"/>
    </cofactor>
    <cofactor evidence="1">
        <name>Mn(2+)</name>
        <dbReference type="ChEBI" id="CHEBI:29035"/>
    </cofactor>
    <text evidence="1">Binds 2 divalent metal cations per subunit. Magnesium or manganese.</text>
</comment>
<comment type="pathway">
    <text evidence="1">Cofactor biosynthesis; riboflavin biosynthesis; 2-hydroxy-3-oxobutyl phosphate from D-ribulose 5-phosphate: step 1/1.</text>
</comment>
<comment type="subunit">
    <text evidence="1">Homodimer.</text>
</comment>
<comment type="similarity">
    <text evidence="1">Belongs to the DHBP synthase family.</text>
</comment>
<accession>C0QJB0</accession>
<dbReference type="EC" id="4.1.99.12" evidence="1"/>
<dbReference type="EMBL" id="CP001087">
    <property type="protein sequence ID" value="ACN15923.1"/>
    <property type="molecule type" value="Genomic_DNA"/>
</dbReference>
<dbReference type="RefSeq" id="WP_015904686.1">
    <property type="nucleotide sequence ID" value="NC_012108.1"/>
</dbReference>
<dbReference type="SMR" id="C0QJB0"/>
<dbReference type="STRING" id="177437.HRM2_28350"/>
<dbReference type="KEGG" id="dat:HRM2_28350"/>
<dbReference type="eggNOG" id="COG0108">
    <property type="taxonomic scope" value="Bacteria"/>
</dbReference>
<dbReference type="HOGENOM" id="CLU_020273_3_0_7"/>
<dbReference type="OrthoDB" id="9793111at2"/>
<dbReference type="UniPathway" id="UPA00275">
    <property type="reaction ID" value="UER00399"/>
</dbReference>
<dbReference type="Proteomes" id="UP000000442">
    <property type="component" value="Chromosome"/>
</dbReference>
<dbReference type="GO" id="GO:0005829">
    <property type="term" value="C:cytosol"/>
    <property type="evidence" value="ECO:0007669"/>
    <property type="project" value="TreeGrafter"/>
</dbReference>
<dbReference type="GO" id="GO:0008686">
    <property type="term" value="F:3,4-dihydroxy-2-butanone-4-phosphate synthase activity"/>
    <property type="evidence" value="ECO:0007669"/>
    <property type="project" value="UniProtKB-UniRule"/>
</dbReference>
<dbReference type="GO" id="GO:0000287">
    <property type="term" value="F:magnesium ion binding"/>
    <property type="evidence" value="ECO:0007669"/>
    <property type="project" value="UniProtKB-UniRule"/>
</dbReference>
<dbReference type="GO" id="GO:0030145">
    <property type="term" value="F:manganese ion binding"/>
    <property type="evidence" value="ECO:0007669"/>
    <property type="project" value="UniProtKB-UniRule"/>
</dbReference>
<dbReference type="GO" id="GO:0009231">
    <property type="term" value="P:riboflavin biosynthetic process"/>
    <property type="evidence" value="ECO:0007669"/>
    <property type="project" value="UniProtKB-UniRule"/>
</dbReference>
<dbReference type="FunFam" id="3.90.870.10:FF:000002">
    <property type="entry name" value="3,4-dihydroxy-2-butanone 4-phosphate synthase"/>
    <property type="match status" value="1"/>
</dbReference>
<dbReference type="Gene3D" id="3.90.870.10">
    <property type="entry name" value="DHBP synthase"/>
    <property type="match status" value="1"/>
</dbReference>
<dbReference type="HAMAP" id="MF_00180">
    <property type="entry name" value="RibB"/>
    <property type="match status" value="1"/>
</dbReference>
<dbReference type="InterPro" id="IPR017945">
    <property type="entry name" value="DHBP_synth_RibB-like_a/b_dom"/>
</dbReference>
<dbReference type="InterPro" id="IPR000422">
    <property type="entry name" value="DHBP_synthase_RibB"/>
</dbReference>
<dbReference type="NCBIfam" id="TIGR00506">
    <property type="entry name" value="ribB"/>
    <property type="match status" value="1"/>
</dbReference>
<dbReference type="PANTHER" id="PTHR21327:SF38">
    <property type="entry name" value="3,4-DIHYDROXY-2-BUTANONE 4-PHOSPHATE SYNTHASE"/>
    <property type="match status" value="1"/>
</dbReference>
<dbReference type="PANTHER" id="PTHR21327">
    <property type="entry name" value="GTP CYCLOHYDROLASE II-RELATED"/>
    <property type="match status" value="1"/>
</dbReference>
<dbReference type="Pfam" id="PF00926">
    <property type="entry name" value="DHBP_synthase"/>
    <property type="match status" value="1"/>
</dbReference>
<dbReference type="SUPFAM" id="SSF55821">
    <property type="entry name" value="YrdC/RibB"/>
    <property type="match status" value="1"/>
</dbReference>
<proteinExistence type="inferred from homology"/>
<keyword id="KW-0456">Lyase</keyword>
<keyword id="KW-0460">Magnesium</keyword>
<keyword id="KW-0464">Manganese</keyword>
<keyword id="KW-0479">Metal-binding</keyword>
<keyword id="KW-1185">Reference proteome</keyword>
<keyword id="KW-0686">Riboflavin biosynthesis</keyword>
<sequence length="217" mass="23120">MSQVSISKFGNPIERVDRAIDALVSGRGVLLVDDEDRENEGDLIFPAGNITAEQVALLIRECSGIICLCLPPERIEQLGLPQMVTCNTSAYQTAFTISIEAAEGVTTGVSAADRATTIRCAAALDARPEDIHSPGHVFPLRAVEQGVLGRRGHTEGTVDLMRLAGLAPAGVLCELTNVDGTMARLPQIITFADEHGFPVLSIEDIAAYRSQPIKKSA</sequence>
<gene>
    <name evidence="1" type="primary">ribB</name>
    <name type="ordered locus">HRM2_28350</name>
</gene>
<protein>
    <recommendedName>
        <fullName evidence="1">3,4-dihydroxy-2-butanone 4-phosphate synthase</fullName>
        <shortName evidence="1">DHBP synthase</shortName>
        <ecNumber evidence="1">4.1.99.12</ecNumber>
    </recommendedName>
</protein>
<feature type="chain" id="PRO_1000203818" description="3,4-dihydroxy-2-butanone 4-phosphate synthase">
    <location>
        <begin position="1"/>
        <end position="217"/>
    </location>
</feature>
<feature type="binding site" evidence="1">
    <location>
        <begin position="37"/>
        <end position="38"/>
    </location>
    <ligand>
        <name>D-ribulose 5-phosphate</name>
        <dbReference type="ChEBI" id="CHEBI:58121"/>
    </ligand>
</feature>
<feature type="binding site" evidence="1">
    <location>
        <position position="38"/>
    </location>
    <ligand>
        <name>Mg(2+)</name>
        <dbReference type="ChEBI" id="CHEBI:18420"/>
        <label>1</label>
    </ligand>
</feature>
<feature type="binding site" evidence="1">
    <location>
        <position position="38"/>
    </location>
    <ligand>
        <name>Mg(2+)</name>
        <dbReference type="ChEBI" id="CHEBI:18420"/>
        <label>2</label>
    </ligand>
</feature>
<feature type="binding site" evidence="1">
    <location>
        <position position="42"/>
    </location>
    <ligand>
        <name>D-ribulose 5-phosphate</name>
        <dbReference type="ChEBI" id="CHEBI:58121"/>
    </ligand>
</feature>
<feature type="binding site" evidence="1">
    <location>
        <begin position="150"/>
        <end position="154"/>
    </location>
    <ligand>
        <name>D-ribulose 5-phosphate</name>
        <dbReference type="ChEBI" id="CHEBI:58121"/>
    </ligand>
</feature>
<feature type="binding site" evidence="1">
    <location>
        <position position="153"/>
    </location>
    <ligand>
        <name>Mg(2+)</name>
        <dbReference type="ChEBI" id="CHEBI:18420"/>
        <label>2</label>
    </ligand>
</feature>
<feature type="binding site" evidence="1">
    <location>
        <position position="174"/>
    </location>
    <ligand>
        <name>D-ribulose 5-phosphate</name>
        <dbReference type="ChEBI" id="CHEBI:58121"/>
    </ligand>
</feature>
<feature type="site" description="Essential for catalytic activity" evidence="1">
    <location>
        <position position="136"/>
    </location>
</feature>
<feature type="site" description="Essential for catalytic activity" evidence="1">
    <location>
        <position position="174"/>
    </location>
</feature>
<organism>
    <name type="scientific">Desulforapulum autotrophicum (strain ATCC 43914 / DSM 3382 / VKM B-1955 / HRM2)</name>
    <name type="common">Desulfobacterium autotrophicum</name>
    <dbReference type="NCBI Taxonomy" id="177437"/>
    <lineage>
        <taxon>Bacteria</taxon>
        <taxon>Pseudomonadati</taxon>
        <taxon>Thermodesulfobacteriota</taxon>
        <taxon>Desulfobacteria</taxon>
        <taxon>Desulfobacterales</taxon>
        <taxon>Desulfobacteraceae</taxon>
        <taxon>Desulforapulum</taxon>
    </lineage>
</organism>
<reference key="1">
    <citation type="journal article" date="2009" name="Environ. Microbiol.">
        <title>Genome sequence of Desulfobacterium autotrophicum HRM2, a marine sulfate reducer oxidizing organic carbon completely to carbon dioxide.</title>
        <authorList>
            <person name="Strittmatter A.W."/>
            <person name="Liesegang H."/>
            <person name="Rabus R."/>
            <person name="Decker I."/>
            <person name="Amann J."/>
            <person name="Andres S."/>
            <person name="Henne A."/>
            <person name="Fricke W.F."/>
            <person name="Martinez-Arias R."/>
            <person name="Bartels D."/>
            <person name="Goesmann A."/>
            <person name="Krause L."/>
            <person name="Puehler A."/>
            <person name="Klenk H.P."/>
            <person name="Richter M."/>
            <person name="Schuler M."/>
            <person name="Gloeckner F.O."/>
            <person name="Meyerdierks A."/>
            <person name="Gottschalk G."/>
            <person name="Amann R."/>
        </authorList>
    </citation>
    <scope>NUCLEOTIDE SEQUENCE [LARGE SCALE GENOMIC DNA]</scope>
    <source>
        <strain>ATCC 43914 / DSM 3382 / VKM B-1955 / HRM2</strain>
    </source>
</reference>